<organism>
    <name type="scientific">Aspergillus fumigatus (strain CBS 144.89 / FGSC A1163 / CEA10)</name>
    <name type="common">Neosartorya fumigata</name>
    <dbReference type="NCBI Taxonomy" id="451804"/>
    <lineage>
        <taxon>Eukaryota</taxon>
        <taxon>Fungi</taxon>
        <taxon>Dikarya</taxon>
        <taxon>Ascomycota</taxon>
        <taxon>Pezizomycotina</taxon>
        <taxon>Eurotiomycetes</taxon>
        <taxon>Eurotiomycetidae</taxon>
        <taxon>Eurotiales</taxon>
        <taxon>Aspergillaceae</taxon>
        <taxon>Aspergillus</taxon>
        <taxon>Aspergillus subgen. Fumigati</taxon>
    </lineage>
</organism>
<accession>B0XPV4</accession>
<proteinExistence type="inferred from homology"/>
<gene>
    <name type="primary">yme2</name>
    <name type="ORF">AFUB_007700</name>
</gene>
<feature type="transit peptide" description="Mitochondrion" evidence="2">
    <location>
        <begin position="1"/>
        <end status="unknown"/>
    </location>
</feature>
<feature type="chain" id="PRO_0000343112" description="Mitochondrial escape protein 2">
    <location>
        <begin status="unknown"/>
        <end position="871"/>
    </location>
</feature>
<feature type="topological domain" description="Mitochondrial matrix" evidence="2">
    <location>
        <begin status="unknown"/>
        <end position="336"/>
    </location>
</feature>
<feature type="transmembrane region" description="Helical" evidence="2">
    <location>
        <begin position="337"/>
        <end position="357"/>
    </location>
</feature>
<feature type="topological domain" description="Mitochondrial intermembrane" evidence="2">
    <location>
        <begin position="358"/>
        <end position="871"/>
    </location>
</feature>
<feature type="domain" description="RRM" evidence="3">
    <location>
        <begin position="229"/>
        <end position="321"/>
    </location>
</feature>
<sequence>MIDVIIRHQASPLIESALVYQSITIIFGNAHLQSSFRKRNVILAAMMRTRIPGLVPRICQTPLPWKRPTQMTRVRYARWSTSHAVTWLETGHIDLKENEGLLFINNIFPSRLQWLLRGPLGGMRSYEAAVKRIDRPHLAASDTFQIIQRVVPKNLNVQVKEVVPRFREGGAFVKYTRPGDVNDADIEASIKENLKEHPIRPWFNPFQEVQVCRVIGRPWIEDLYRLPSPRLKVSFHPVSPEASAADLNTETLYTLFRPYGKIRDIETQPSDGKVTPRYAYVEFSRPKYAGMAKNCMHGFTIPEQEGGGKSGTRLKIKYERKIKLSMIKDWLLNHPRIVIPVLAALLAAITVTIFDPMRTFFIELKIKSTLQTEENGVMQWIRKQVNKANIIYFGRKGADPRGLTAIWEDRQEDITRLQSWLMENVETFIIIHGPRGSGKRELVLDRALVDYKYKIVIDCKQIQDARGDSAKIARAASQVGYRPVFSWMNSISSFIDLAAQGMIGTKAGFSETLDAQLSNIWQNTATALKKVTLEHRKKNDNDSHLTDEEYLEAHPELRPVVVIDNYLHNASESSVVYDKITEWAAGLTAGNIAHVIFLTTDVSYAKPLSKALPNSVFRTITLGDCSLEVGRKFVMSHLAYESKDGKTQPRRAEELEDLDACIEALGGRVTDLEFMAHRIEAGETPRGAVNRIIEQSASEILKMFLLTPETIEQSWTHEQAWYLIKRLAESKDGSLSYNEIVLSELFKENGEITLRALEHAELISIAAVNGCPQRIRPGKPVLRAVFKKVTENKALSSRMDLAIIAKKINKENKSIEKYEEELSLLGSLPRQPRELTDRIQWLLNKVYSSQNKIAKYEKESAYLQKILRSEH</sequence>
<keyword id="KW-0472">Membrane</keyword>
<keyword id="KW-0496">Mitochondrion</keyword>
<keyword id="KW-0999">Mitochondrion inner membrane</keyword>
<keyword id="KW-0507">mRNA processing</keyword>
<keyword id="KW-0694">RNA-binding</keyword>
<keyword id="KW-0809">Transit peptide</keyword>
<keyword id="KW-0812">Transmembrane</keyword>
<keyword id="KW-1133">Transmembrane helix</keyword>
<dbReference type="EMBL" id="DS499594">
    <property type="protein sequence ID" value="EDP56068.1"/>
    <property type="status" value="ALT_SEQ"/>
    <property type="molecule type" value="Genomic_DNA"/>
</dbReference>
<dbReference type="VEuPathDB" id="FungiDB:AFUB_007700"/>
<dbReference type="OrthoDB" id="78767at5052"/>
<dbReference type="PhylomeDB" id="B0XPV4"/>
<dbReference type="Proteomes" id="UP000001699">
    <property type="component" value="Unassembled WGS sequence"/>
</dbReference>
<dbReference type="GO" id="GO:0005743">
    <property type="term" value="C:mitochondrial inner membrane"/>
    <property type="evidence" value="ECO:0007669"/>
    <property type="project" value="UniProtKB-SubCell"/>
</dbReference>
<dbReference type="GO" id="GO:0003723">
    <property type="term" value="F:RNA binding"/>
    <property type="evidence" value="ECO:0007669"/>
    <property type="project" value="UniProtKB-KW"/>
</dbReference>
<dbReference type="GO" id="GO:0000002">
    <property type="term" value="P:mitochondrial genome maintenance"/>
    <property type="evidence" value="ECO:0007669"/>
    <property type="project" value="InterPro"/>
</dbReference>
<dbReference type="GO" id="GO:0006397">
    <property type="term" value="P:mRNA processing"/>
    <property type="evidence" value="ECO:0007669"/>
    <property type="project" value="UniProtKB-KW"/>
</dbReference>
<dbReference type="FunFam" id="3.30.70.330:FF:000959">
    <property type="entry name" value="Mitochondrial escape protein 2"/>
    <property type="match status" value="1"/>
</dbReference>
<dbReference type="Gene3D" id="3.30.70.330">
    <property type="match status" value="1"/>
</dbReference>
<dbReference type="InterPro" id="IPR018850">
    <property type="entry name" value="Mt_escape_2_C"/>
</dbReference>
<dbReference type="InterPro" id="IPR012677">
    <property type="entry name" value="Nucleotide-bd_a/b_plait_sf"/>
</dbReference>
<dbReference type="InterPro" id="IPR035979">
    <property type="entry name" value="RBD_domain_sf"/>
</dbReference>
<dbReference type="InterPro" id="IPR000504">
    <property type="entry name" value="RRM_dom"/>
</dbReference>
<dbReference type="InterPro" id="IPR039627">
    <property type="entry name" value="Yme2_C"/>
</dbReference>
<dbReference type="PANTHER" id="PTHR32198">
    <property type="entry name" value="MITOCHONDRIAL ESCAPE PROTEIN 2"/>
    <property type="match status" value="1"/>
</dbReference>
<dbReference type="PANTHER" id="PTHR32198:SF2">
    <property type="entry name" value="MITOCHONDRIAL ESCAPE PROTEIN 2"/>
    <property type="match status" value="1"/>
</dbReference>
<dbReference type="Pfam" id="PF10443">
    <property type="entry name" value="RNA12"/>
    <property type="match status" value="1"/>
</dbReference>
<dbReference type="Pfam" id="PF00076">
    <property type="entry name" value="RRM_1"/>
    <property type="match status" value="1"/>
</dbReference>
<dbReference type="SUPFAM" id="SSF54928">
    <property type="entry name" value="RNA-binding domain, RBD"/>
    <property type="match status" value="1"/>
</dbReference>
<dbReference type="PROSITE" id="PS50102">
    <property type="entry name" value="RRM"/>
    <property type="match status" value="1"/>
</dbReference>
<name>YME2_ASPFC</name>
<reference key="1">
    <citation type="journal article" date="2008" name="PLoS Genet.">
        <title>Genomic islands in the pathogenic filamentous fungus Aspergillus fumigatus.</title>
        <authorList>
            <person name="Fedorova N.D."/>
            <person name="Khaldi N."/>
            <person name="Joardar V.S."/>
            <person name="Maiti R."/>
            <person name="Amedeo P."/>
            <person name="Anderson M.J."/>
            <person name="Crabtree J."/>
            <person name="Silva J.C."/>
            <person name="Badger J.H."/>
            <person name="Albarraq A."/>
            <person name="Angiuoli S."/>
            <person name="Bussey H."/>
            <person name="Bowyer P."/>
            <person name="Cotty P.J."/>
            <person name="Dyer P.S."/>
            <person name="Egan A."/>
            <person name="Galens K."/>
            <person name="Fraser-Liggett C.M."/>
            <person name="Haas B.J."/>
            <person name="Inman J.M."/>
            <person name="Kent R."/>
            <person name="Lemieux S."/>
            <person name="Malavazi I."/>
            <person name="Orvis J."/>
            <person name="Roemer T."/>
            <person name="Ronning C.M."/>
            <person name="Sundaram J.P."/>
            <person name="Sutton G."/>
            <person name="Turner G."/>
            <person name="Venter J.C."/>
            <person name="White O.R."/>
            <person name="Whitty B.R."/>
            <person name="Youngman P."/>
            <person name="Wolfe K.H."/>
            <person name="Goldman G.H."/>
            <person name="Wortman J.R."/>
            <person name="Jiang B."/>
            <person name="Denning D.W."/>
            <person name="Nierman W.C."/>
        </authorList>
    </citation>
    <scope>NUCLEOTIDE SEQUENCE [LARGE SCALE GENOMIC DNA]</scope>
    <source>
        <strain>CBS 144.89 / FGSC A1163 / CEA10</strain>
    </source>
</reference>
<protein>
    <recommendedName>
        <fullName>Mitochondrial escape protein 2</fullName>
    </recommendedName>
</protein>
<evidence type="ECO:0000250" key="1"/>
<evidence type="ECO:0000255" key="2"/>
<evidence type="ECO:0000255" key="3">
    <source>
        <dbReference type="PROSITE-ProRule" id="PRU00176"/>
    </source>
</evidence>
<evidence type="ECO:0000305" key="4"/>
<comment type="function">
    <text evidence="1">Plays a role in maintaining the mitochondrial genome and in controlling the mtDNA escape. Involved in the regulation of mtDNA nucleotide structure and number. May have a dispensable role in early maturation of pre-rRNA (By similarity).</text>
</comment>
<comment type="subcellular location">
    <subcellularLocation>
        <location evidence="1">Mitochondrion inner membrane</location>
        <topology evidence="1">Single-pass membrane protein</topology>
    </subcellularLocation>
</comment>
<comment type="similarity">
    <text evidence="4">Belongs to the YME2 family.</text>
</comment>
<comment type="sequence caution" evidence="4">
    <conflict type="erroneous gene model prediction">
        <sequence resource="EMBL-CDS" id="EDP56068"/>
    </conflict>
</comment>